<organism>
    <name type="scientific">Haemophilus influenzae (strain ATCC 51907 / DSM 11121 / KW20 / Rd)</name>
    <dbReference type="NCBI Taxonomy" id="71421"/>
    <lineage>
        <taxon>Bacteria</taxon>
        <taxon>Pseudomonadati</taxon>
        <taxon>Pseudomonadota</taxon>
        <taxon>Gammaproteobacteria</taxon>
        <taxon>Pasteurellales</taxon>
        <taxon>Pasteurellaceae</taxon>
        <taxon>Haemophilus</taxon>
    </lineage>
</organism>
<accession>P43739</accession>
<sequence length="1415" mass="157210">MKDLVKFLKAQSKTSEDFDVIKIGLASPDMIRSWSFGEVKKPETINYRTFKPERDGLFCARIFGPVKDYECLCGKYKRLKHRGVICEKCGVEVTQTKVRRERMGHIELASPVAHIWFLKSLPSRIGLLLDMPLRDIERVLYFEMYIVTEPGMTDLERGQLLTEEQYLDAEDRWQDEFEAKMGAEAIQDLLKGMDLEAECEKLREELQETNSETKRKKITKRLKLLEAFVQSGNKPEWMVMTVLPVLPPDLRPLVPLDGGRFATSDLNDLYRRVINRNNRLKRLLDLIAPDIIVRNEKRMLQESVDALLDNGRRGRAITGSNRRPLKSLADMIKGKQGRFRQNLLGKRVDYSGRSVITVGPYLHLHQCGLPKKMALELFRPFIYAKLESRGYATTIKAAKKMVEREDAIVWDILAEVIREHPILLNRAPTLHRLGIQAFEPILIEGKAIQLHPLVCAAFNADFDGDQMAVHVPLTLEAQLEARALMMSTNNVLSPANGDPIIVPSQDVVLGLYYMTREKVNGKGEGMLLQDPREAEKAYRTGEAELHSRVKVRITEYVKNEAGEFDAKTTLTDTTIGRAILWMIAPKGMPYSLFNQTLGKKAISKLINEAYRRLGLKEAVMFADQIMYTGFAYAARSGSSVGIDDMEIPAKKYEIISAAEEEVAEIQEQFQSGLVTAGERYNKVIDIWAAANERVAKAMMENLSQEEVINREGNPEKQASFNSIFMMADSGARGSAAQIRQLAGMRGLMARPDGSIIETPITANFREGLNVLQYFISTHGARKGLADTALKTANSGYLTRRLVDVAQDLVIVEDDCGTHEGLVMTPLIEGGDEKVPLRELVLGRVAAEDILKPGTEEVLIPRNTLLDEKLCDVLDANSVDSVKVRSVVTCDTDFGVCAKCYGRDLARGHLINQGEAVGVIAAQSIGEPGTQLTMRTFHIGGAASAAAKESSVQVKNTGTVHLMNAKFVTNDESKLVLTSRNTELTITDAFGRTKEHYKVPYGAVLSKGDGQEVTAGETIANWDPHTMPVVSEVSGFVKFVDIIDGLTVTRQTDELTGLSSIVVQDVGERATAGKDLRPTIKLVDANGNDIFLPETDVLAQYFLPGKAIVSLDDGTAVKVGEPLARIPQESVGTKDITGGLPRVADLFEARKPKEPAILAEISGIVSFGKETKGKRRLLITPAEGETYEEMIPKWRQLNVFEGEMVQRGDVISDGAETPHDILRLRGVRAVTEYIVNEVQDVYRLQGVKINDKHIEVIVRQMLRKAVITKAYDSEFLEGEQVEVARVKIVNRQREAEGKPPVEFERELLGITKASLATESFISAASFQETTRVLTEAAVAGKRDELRGLKENVIVGRLIPAGTGFAYHQNRHKHRLVDDVVAKLSEEDEAAIADEFVITADDATQNLATLLNSEIED</sequence>
<protein>
    <recommendedName>
        <fullName evidence="1">DNA-directed RNA polymerase subunit beta'</fullName>
        <shortName evidence="1">RNAP subunit beta'</shortName>
        <ecNumber evidence="1">2.7.7.6</ecNumber>
    </recommendedName>
    <alternativeName>
        <fullName evidence="1">RNA polymerase subunit beta'</fullName>
    </alternativeName>
    <alternativeName>
        <fullName evidence="1">Transcriptase subunit beta'</fullName>
    </alternativeName>
</protein>
<evidence type="ECO:0000255" key="1">
    <source>
        <dbReference type="HAMAP-Rule" id="MF_01322"/>
    </source>
</evidence>
<keyword id="KW-0240">DNA-directed RNA polymerase</keyword>
<keyword id="KW-0460">Magnesium</keyword>
<keyword id="KW-0479">Metal-binding</keyword>
<keyword id="KW-0548">Nucleotidyltransferase</keyword>
<keyword id="KW-1185">Reference proteome</keyword>
<keyword id="KW-0804">Transcription</keyword>
<keyword id="KW-0808">Transferase</keyword>
<keyword id="KW-0862">Zinc</keyword>
<feature type="chain" id="PRO_0000067747" description="DNA-directed RNA polymerase subunit beta'">
    <location>
        <begin position="1"/>
        <end position="1415"/>
    </location>
</feature>
<feature type="binding site" evidence="1">
    <location>
        <position position="71"/>
    </location>
    <ligand>
        <name>Zn(2+)</name>
        <dbReference type="ChEBI" id="CHEBI:29105"/>
        <label>1</label>
    </ligand>
</feature>
<feature type="binding site" evidence="1">
    <location>
        <position position="73"/>
    </location>
    <ligand>
        <name>Zn(2+)</name>
        <dbReference type="ChEBI" id="CHEBI:29105"/>
        <label>1</label>
    </ligand>
</feature>
<feature type="binding site" evidence="1">
    <location>
        <position position="86"/>
    </location>
    <ligand>
        <name>Zn(2+)</name>
        <dbReference type="ChEBI" id="CHEBI:29105"/>
        <label>1</label>
    </ligand>
</feature>
<feature type="binding site" evidence="1">
    <location>
        <position position="89"/>
    </location>
    <ligand>
        <name>Zn(2+)</name>
        <dbReference type="ChEBI" id="CHEBI:29105"/>
        <label>1</label>
    </ligand>
</feature>
<feature type="binding site" evidence="1">
    <location>
        <position position="461"/>
    </location>
    <ligand>
        <name>Mg(2+)</name>
        <dbReference type="ChEBI" id="CHEBI:18420"/>
    </ligand>
</feature>
<feature type="binding site" evidence="1">
    <location>
        <position position="463"/>
    </location>
    <ligand>
        <name>Mg(2+)</name>
        <dbReference type="ChEBI" id="CHEBI:18420"/>
    </ligand>
</feature>
<feature type="binding site" evidence="1">
    <location>
        <position position="465"/>
    </location>
    <ligand>
        <name>Mg(2+)</name>
        <dbReference type="ChEBI" id="CHEBI:18420"/>
    </ligand>
</feature>
<feature type="binding site" evidence="1">
    <location>
        <position position="815"/>
    </location>
    <ligand>
        <name>Zn(2+)</name>
        <dbReference type="ChEBI" id="CHEBI:29105"/>
        <label>2</label>
    </ligand>
</feature>
<feature type="binding site" evidence="1">
    <location>
        <position position="889"/>
    </location>
    <ligand>
        <name>Zn(2+)</name>
        <dbReference type="ChEBI" id="CHEBI:29105"/>
        <label>2</label>
    </ligand>
</feature>
<feature type="binding site" evidence="1">
    <location>
        <position position="896"/>
    </location>
    <ligand>
        <name>Zn(2+)</name>
        <dbReference type="ChEBI" id="CHEBI:29105"/>
        <label>2</label>
    </ligand>
</feature>
<feature type="binding site" evidence="1">
    <location>
        <position position="899"/>
    </location>
    <ligand>
        <name>Zn(2+)</name>
        <dbReference type="ChEBI" id="CHEBI:29105"/>
        <label>2</label>
    </ligand>
</feature>
<dbReference type="EC" id="2.7.7.6" evidence="1"/>
<dbReference type="EMBL" id="L42023">
    <property type="protein sequence ID" value="AAC22172.1"/>
    <property type="molecule type" value="Genomic_DNA"/>
</dbReference>
<dbReference type="PIR" id="G64073">
    <property type="entry name" value="G64073"/>
</dbReference>
<dbReference type="RefSeq" id="NP_438672.1">
    <property type="nucleotide sequence ID" value="NC_000907.1"/>
</dbReference>
<dbReference type="SMR" id="P43739"/>
<dbReference type="STRING" id="71421.HI_0514"/>
<dbReference type="EnsemblBacteria" id="AAC22172">
    <property type="protein sequence ID" value="AAC22172"/>
    <property type="gene ID" value="HI_0514"/>
</dbReference>
<dbReference type="KEGG" id="hin:HI_0514"/>
<dbReference type="PATRIC" id="fig|71421.8.peg.533"/>
<dbReference type="eggNOG" id="COG0086">
    <property type="taxonomic scope" value="Bacteria"/>
</dbReference>
<dbReference type="HOGENOM" id="CLU_000524_3_1_6"/>
<dbReference type="OrthoDB" id="9815296at2"/>
<dbReference type="PhylomeDB" id="P43739"/>
<dbReference type="BioCyc" id="HINF71421:G1GJ1-527-MONOMER"/>
<dbReference type="Proteomes" id="UP000000579">
    <property type="component" value="Chromosome"/>
</dbReference>
<dbReference type="GO" id="GO:0000428">
    <property type="term" value="C:DNA-directed RNA polymerase complex"/>
    <property type="evidence" value="ECO:0007669"/>
    <property type="project" value="UniProtKB-KW"/>
</dbReference>
<dbReference type="GO" id="GO:0003677">
    <property type="term" value="F:DNA binding"/>
    <property type="evidence" value="ECO:0007669"/>
    <property type="project" value="UniProtKB-UniRule"/>
</dbReference>
<dbReference type="GO" id="GO:0003899">
    <property type="term" value="F:DNA-directed RNA polymerase activity"/>
    <property type="evidence" value="ECO:0007669"/>
    <property type="project" value="UniProtKB-UniRule"/>
</dbReference>
<dbReference type="GO" id="GO:0000287">
    <property type="term" value="F:magnesium ion binding"/>
    <property type="evidence" value="ECO:0007669"/>
    <property type="project" value="UniProtKB-UniRule"/>
</dbReference>
<dbReference type="GO" id="GO:0008270">
    <property type="term" value="F:zinc ion binding"/>
    <property type="evidence" value="ECO:0007669"/>
    <property type="project" value="UniProtKB-UniRule"/>
</dbReference>
<dbReference type="GO" id="GO:0006351">
    <property type="term" value="P:DNA-templated transcription"/>
    <property type="evidence" value="ECO:0007669"/>
    <property type="project" value="UniProtKB-UniRule"/>
</dbReference>
<dbReference type="CDD" id="cd02655">
    <property type="entry name" value="RNAP_beta'_C"/>
    <property type="match status" value="1"/>
</dbReference>
<dbReference type="CDD" id="cd01609">
    <property type="entry name" value="RNAP_beta'_N"/>
    <property type="match status" value="1"/>
</dbReference>
<dbReference type="FunFam" id="1.10.132.30:FF:000003">
    <property type="entry name" value="DNA-directed RNA polymerase subunit beta"/>
    <property type="match status" value="1"/>
</dbReference>
<dbReference type="FunFam" id="1.10.150.390:FF:000002">
    <property type="entry name" value="DNA-directed RNA polymerase subunit beta"/>
    <property type="match status" value="1"/>
</dbReference>
<dbReference type="FunFam" id="1.10.40.90:FF:000001">
    <property type="entry name" value="DNA-directed RNA polymerase subunit beta"/>
    <property type="match status" value="1"/>
</dbReference>
<dbReference type="FunFam" id="4.10.860.120:FF:000001">
    <property type="entry name" value="DNA-directed RNA polymerase subunit beta"/>
    <property type="match status" value="1"/>
</dbReference>
<dbReference type="Gene3D" id="1.10.132.30">
    <property type="match status" value="1"/>
</dbReference>
<dbReference type="Gene3D" id="1.10.150.390">
    <property type="match status" value="1"/>
</dbReference>
<dbReference type="Gene3D" id="1.10.1790.20">
    <property type="match status" value="1"/>
</dbReference>
<dbReference type="Gene3D" id="1.10.40.90">
    <property type="match status" value="1"/>
</dbReference>
<dbReference type="Gene3D" id="2.40.40.20">
    <property type="match status" value="1"/>
</dbReference>
<dbReference type="Gene3D" id="2.40.50.100">
    <property type="match status" value="3"/>
</dbReference>
<dbReference type="Gene3D" id="4.10.860.120">
    <property type="entry name" value="RNA polymerase II, clamp domain"/>
    <property type="match status" value="1"/>
</dbReference>
<dbReference type="Gene3D" id="1.10.274.100">
    <property type="entry name" value="RNA polymerase Rpb1, domain 3"/>
    <property type="match status" value="1"/>
</dbReference>
<dbReference type="HAMAP" id="MF_01322">
    <property type="entry name" value="RNApol_bact_RpoC"/>
    <property type="match status" value="1"/>
</dbReference>
<dbReference type="InterPro" id="IPR045867">
    <property type="entry name" value="DNA-dir_RpoC_beta_prime"/>
</dbReference>
<dbReference type="InterPro" id="IPR012754">
    <property type="entry name" value="DNA-dir_RpoC_beta_prime_bact"/>
</dbReference>
<dbReference type="InterPro" id="IPR000722">
    <property type="entry name" value="RNA_pol_asu"/>
</dbReference>
<dbReference type="InterPro" id="IPR006592">
    <property type="entry name" value="RNA_pol_N"/>
</dbReference>
<dbReference type="InterPro" id="IPR007080">
    <property type="entry name" value="RNA_pol_Rpb1_1"/>
</dbReference>
<dbReference type="InterPro" id="IPR007066">
    <property type="entry name" value="RNA_pol_Rpb1_3"/>
</dbReference>
<dbReference type="InterPro" id="IPR042102">
    <property type="entry name" value="RNA_pol_Rpb1_3_sf"/>
</dbReference>
<dbReference type="InterPro" id="IPR007083">
    <property type="entry name" value="RNA_pol_Rpb1_4"/>
</dbReference>
<dbReference type="InterPro" id="IPR007081">
    <property type="entry name" value="RNA_pol_Rpb1_5"/>
</dbReference>
<dbReference type="InterPro" id="IPR044893">
    <property type="entry name" value="RNA_pol_Rpb1_clamp_domain"/>
</dbReference>
<dbReference type="InterPro" id="IPR038120">
    <property type="entry name" value="Rpb1_funnel_sf"/>
</dbReference>
<dbReference type="NCBIfam" id="TIGR02386">
    <property type="entry name" value="rpoC_TIGR"/>
    <property type="match status" value="1"/>
</dbReference>
<dbReference type="PANTHER" id="PTHR19376">
    <property type="entry name" value="DNA-DIRECTED RNA POLYMERASE"/>
    <property type="match status" value="1"/>
</dbReference>
<dbReference type="PANTHER" id="PTHR19376:SF54">
    <property type="entry name" value="DNA-DIRECTED RNA POLYMERASE SUBUNIT BETA"/>
    <property type="match status" value="1"/>
</dbReference>
<dbReference type="Pfam" id="PF04997">
    <property type="entry name" value="RNA_pol_Rpb1_1"/>
    <property type="match status" value="1"/>
</dbReference>
<dbReference type="Pfam" id="PF00623">
    <property type="entry name" value="RNA_pol_Rpb1_2"/>
    <property type="match status" value="2"/>
</dbReference>
<dbReference type="Pfam" id="PF04983">
    <property type="entry name" value="RNA_pol_Rpb1_3"/>
    <property type="match status" value="1"/>
</dbReference>
<dbReference type="Pfam" id="PF05000">
    <property type="entry name" value="RNA_pol_Rpb1_4"/>
    <property type="match status" value="1"/>
</dbReference>
<dbReference type="Pfam" id="PF04998">
    <property type="entry name" value="RNA_pol_Rpb1_5"/>
    <property type="match status" value="1"/>
</dbReference>
<dbReference type="SMART" id="SM00663">
    <property type="entry name" value="RPOLA_N"/>
    <property type="match status" value="1"/>
</dbReference>
<dbReference type="SUPFAM" id="SSF64484">
    <property type="entry name" value="beta and beta-prime subunits of DNA dependent RNA-polymerase"/>
    <property type="match status" value="1"/>
</dbReference>
<name>RPOC_HAEIN</name>
<gene>
    <name evidence="1" type="primary">rpoC</name>
    <name type="ordered locus">HI_0514</name>
</gene>
<comment type="function">
    <text evidence="1">DNA-dependent RNA polymerase catalyzes the transcription of DNA into RNA using the four ribonucleoside triphosphates as substrates.</text>
</comment>
<comment type="catalytic activity">
    <reaction evidence="1">
        <text>RNA(n) + a ribonucleoside 5'-triphosphate = RNA(n+1) + diphosphate</text>
        <dbReference type="Rhea" id="RHEA:21248"/>
        <dbReference type="Rhea" id="RHEA-COMP:14527"/>
        <dbReference type="Rhea" id="RHEA-COMP:17342"/>
        <dbReference type="ChEBI" id="CHEBI:33019"/>
        <dbReference type="ChEBI" id="CHEBI:61557"/>
        <dbReference type="ChEBI" id="CHEBI:140395"/>
        <dbReference type="EC" id="2.7.7.6"/>
    </reaction>
</comment>
<comment type="cofactor">
    <cofactor evidence="1">
        <name>Mg(2+)</name>
        <dbReference type="ChEBI" id="CHEBI:18420"/>
    </cofactor>
    <text evidence="1">Binds 1 Mg(2+) ion per subunit.</text>
</comment>
<comment type="cofactor">
    <cofactor evidence="1">
        <name>Zn(2+)</name>
        <dbReference type="ChEBI" id="CHEBI:29105"/>
    </cofactor>
    <text evidence="1">Binds 2 Zn(2+) ions per subunit.</text>
</comment>
<comment type="subunit">
    <text evidence="1">The RNAP catalytic core consists of 2 alpha, 1 beta, 1 beta' and 1 omega subunit. When a sigma factor is associated with the core the holoenzyme is formed, which can initiate transcription.</text>
</comment>
<comment type="similarity">
    <text evidence="1">Belongs to the RNA polymerase beta' chain family.</text>
</comment>
<proteinExistence type="inferred from homology"/>
<reference key="1">
    <citation type="journal article" date="1995" name="Science">
        <title>Whole-genome random sequencing and assembly of Haemophilus influenzae Rd.</title>
        <authorList>
            <person name="Fleischmann R.D."/>
            <person name="Adams M.D."/>
            <person name="White O."/>
            <person name="Clayton R.A."/>
            <person name="Kirkness E.F."/>
            <person name="Kerlavage A.R."/>
            <person name="Bult C.J."/>
            <person name="Tomb J.-F."/>
            <person name="Dougherty B.A."/>
            <person name="Merrick J.M."/>
            <person name="McKenney K."/>
            <person name="Sutton G.G."/>
            <person name="FitzHugh W."/>
            <person name="Fields C.A."/>
            <person name="Gocayne J.D."/>
            <person name="Scott J.D."/>
            <person name="Shirley R."/>
            <person name="Liu L.-I."/>
            <person name="Glodek A."/>
            <person name="Kelley J.M."/>
            <person name="Weidman J.F."/>
            <person name="Phillips C.A."/>
            <person name="Spriggs T."/>
            <person name="Hedblom E."/>
            <person name="Cotton M.D."/>
            <person name="Utterback T.R."/>
            <person name="Hanna M.C."/>
            <person name="Nguyen D.T."/>
            <person name="Saudek D.M."/>
            <person name="Brandon R.C."/>
            <person name="Fine L.D."/>
            <person name="Fritchman J.L."/>
            <person name="Fuhrmann J.L."/>
            <person name="Geoghagen N.S.M."/>
            <person name="Gnehm C.L."/>
            <person name="McDonald L.A."/>
            <person name="Small K.V."/>
            <person name="Fraser C.M."/>
            <person name="Smith H.O."/>
            <person name="Venter J.C."/>
        </authorList>
    </citation>
    <scope>NUCLEOTIDE SEQUENCE [LARGE SCALE GENOMIC DNA]</scope>
    <source>
        <strain>ATCC 51907 / DSM 11121 / KW20 / Rd</strain>
    </source>
</reference>